<accession>Q6AF97</accession>
<sequence>MLRWLTAGESHGPELIAVLEGLPAGVPVSPDAIRADLARRKLGYGRGSRMKFEQDALEVSGGVRHGLSLGSPVALRIGNSEWPKWVDLMSPEPIAAEKLAGARGAPLTRPRPGHADLAGMQKYGFDEARPVLERASARETAARVALGAVARSFLGELGITLVSHTLSIGPVRVPEDAVWPTPADVAALDADPLRCFDRATSARMVAEVDAAHKDGDTLGGVIEVLAYGLPPGLGSYVHWDRRLDAQLAAALMGIQAIKGVEVGDGFLTATRRGSEAHDELVAEDGAIVRQSGRAGGTEGGMSTGGVLRVRAGMKPIATVPRALRTIDVATSEAAPAHHQRSDVCAVPAAGVVAEAMVALVLANAVLEKFGGDSIGETARNLRGYLDAISQNLATERVSAPYA</sequence>
<evidence type="ECO:0000255" key="1">
    <source>
        <dbReference type="HAMAP-Rule" id="MF_00300"/>
    </source>
</evidence>
<gene>
    <name evidence="1" type="primary">aroC</name>
    <name type="ordered locus">Lxx10950</name>
</gene>
<feature type="chain" id="PRO_0000140603" description="Chorismate synthase">
    <location>
        <begin position="1"/>
        <end position="402"/>
    </location>
</feature>
<feature type="binding site" evidence="1">
    <location>
        <position position="40"/>
    </location>
    <ligand>
        <name>NADP(+)</name>
        <dbReference type="ChEBI" id="CHEBI:58349"/>
    </ligand>
</feature>
<feature type="binding site" evidence="1">
    <location>
        <position position="46"/>
    </location>
    <ligand>
        <name>NADP(+)</name>
        <dbReference type="ChEBI" id="CHEBI:58349"/>
    </ligand>
</feature>
<feature type="binding site" evidence="1">
    <location>
        <begin position="134"/>
        <end position="136"/>
    </location>
    <ligand>
        <name>FMN</name>
        <dbReference type="ChEBI" id="CHEBI:58210"/>
    </ligand>
</feature>
<feature type="binding site" evidence="1">
    <location>
        <begin position="255"/>
        <end position="256"/>
    </location>
    <ligand>
        <name>FMN</name>
        <dbReference type="ChEBI" id="CHEBI:58210"/>
    </ligand>
</feature>
<feature type="binding site" evidence="1">
    <location>
        <position position="299"/>
    </location>
    <ligand>
        <name>FMN</name>
        <dbReference type="ChEBI" id="CHEBI:58210"/>
    </ligand>
</feature>
<feature type="binding site" evidence="1">
    <location>
        <begin position="314"/>
        <end position="318"/>
    </location>
    <ligand>
        <name>FMN</name>
        <dbReference type="ChEBI" id="CHEBI:58210"/>
    </ligand>
</feature>
<feature type="binding site" evidence="1">
    <location>
        <position position="340"/>
    </location>
    <ligand>
        <name>FMN</name>
        <dbReference type="ChEBI" id="CHEBI:58210"/>
    </ligand>
</feature>
<name>AROC_LEIXX</name>
<keyword id="KW-0028">Amino-acid biosynthesis</keyword>
<keyword id="KW-0057">Aromatic amino acid biosynthesis</keyword>
<keyword id="KW-0274">FAD</keyword>
<keyword id="KW-0285">Flavoprotein</keyword>
<keyword id="KW-0288">FMN</keyword>
<keyword id="KW-0456">Lyase</keyword>
<keyword id="KW-0521">NADP</keyword>
<keyword id="KW-1185">Reference proteome</keyword>
<organism>
    <name type="scientific">Leifsonia xyli subsp. xyli (strain CTCB07)</name>
    <dbReference type="NCBI Taxonomy" id="281090"/>
    <lineage>
        <taxon>Bacteria</taxon>
        <taxon>Bacillati</taxon>
        <taxon>Actinomycetota</taxon>
        <taxon>Actinomycetes</taxon>
        <taxon>Micrococcales</taxon>
        <taxon>Microbacteriaceae</taxon>
        <taxon>Leifsonia</taxon>
    </lineage>
</organism>
<protein>
    <recommendedName>
        <fullName evidence="1">Chorismate synthase</fullName>
        <shortName evidence="1">CS</shortName>
        <ecNumber evidence="1">4.2.3.5</ecNumber>
    </recommendedName>
    <alternativeName>
        <fullName evidence="1">5-enolpyruvylshikimate-3-phosphate phospholyase</fullName>
    </alternativeName>
</protein>
<reference key="1">
    <citation type="journal article" date="2004" name="Mol. Plant Microbe Interact.">
        <title>The genome sequence of the Gram-positive sugarcane pathogen Leifsonia xyli subsp. xyli.</title>
        <authorList>
            <person name="Monteiro-Vitorello C.B."/>
            <person name="Camargo L.E.A."/>
            <person name="Van Sluys M.A."/>
            <person name="Kitajima J.P."/>
            <person name="Truffi D."/>
            <person name="do Amaral A.M."/>
            <person name="Harakava R."/>
            <person name="de Oliveira J.C.F."/>
            <person name="Wood D."/>
            <person name="de Oliveira M.C."/>
            <person name="Miyaki C.Y."/>
            <person name="Takita M.A."/>
            <person name="da Silva A.C.R."/>
            <person name="Furlan L.R."/>
            <person name="Carraro D.M."/>
            <person name="Camarotte G."/>
            <person name="Almeida N.F. Jr."/>
            <person name="Carrer H."/>
            <person name="Coutinho L.L."/>
            <person name="El-Dorry H.A."/>
            <person name="Ferro M.I.T."/>
            <person name="Gagliardi P.R."/>
            <person name="Giglioti E."/>
            <person name="Goldman M.H.S."/>
            <person name="Goldman G.H."/>
            <person name="Kimura E.T."/>
            <person name="Ferro E.S."/>
            <person name="Kuramae E.E."/>
            <person name="Lemos E.G.M."/>
            <person name="Lemos M.V.F."/>
            <person name="Mauro S.M.Z."/>
            <person name="Machado M.A."/>
            <person name="Marino C.L."/>
            <person name="Menck C.F."/>
            <person name="Nunes L.R."/>
            <person name="Oliveira R.C."/>
            <person name="Pereira G.G."/>
            <person name="Siqueira W."/>
            <person name="de Souza A.A."/>
            <person name="Tsai S.M."/>
            <person name="Zanca A.S."/>
            <person name="Simpson A.J.G."/>
            <person name="Brumbley S.M."/>
            <person name="Setubal J.C."/>
        </authorList>
    </citation>
    <scope>NUCLEOTIDE SEQUENCE [LARGE SCALE GENOMIC DNA]</scope>
    <source>
        <strain>CTCB07</strain>
    </source>
</reference>
<comment type="function">
    <text evidence="1">Catalyzes the anti-1,4-elimination of the C-3 phosphate and the C-6 proR hydrogen from 5-enolpyruvylshikimate-3-phosphate (EPSP) to yield chorismate, which is the branch point compound that serves as the starting substrate for the three terminal pathways of aromatic amino acid biosynthesis. This reaction introduces a second double bond into the aromatic ring system.</text>
</comment>
<comment type="catalytic activity">
    <reaction evidence="1">
        <text>5-O-(1-carboxyvinyl)-3-phosphoshikimate = chorismate + phosphate</text>
        <dbReference type="Rhea" id="RHEA:21020"/>
        <dbReference type="ChEBI" id="CHEBI:29748"/>
        <dbReference type="ChEBI" id="CHEBI:43474"/>
        <dbReference type="ChEBI" id="CHEBI:57701"/>
        <dbReference type="EC" id="4.2.3.5"/>
    </reaction>
</comment>
<comment type="cofactor">
    <cofactor evidence="1">
        <name>FMNH2</name>
        <dbReference type="ChEBI" id="CHEBI:57618"/>
    </cofactor>
    <text evidence="1">Reduced FMN (FMNH(2)).</text>
</comment>
<comment type="pathway">
    <text evidence="1">Metabolic intermediate biosynthesis; chorismate biosynthesis; chorismate from D-erythrose 4-phosphate and phosphoenolpyruvate: step 7/7.</text>
</comment>
<comment type="subunit">
    <text evidence="1">Homotetramer.</text>
</comment>
<comment type="similarity">
    <text evidence="1">Belongs to the chorismate synthase family.</text>
</comment>
<dbReference type="EC" id="4.2.3.5" evidence="1"/>
<dbReference type="EMBL" id="AE016822">
    <property type="protein sequence ID" value="AAT88948.1"/>
    <property type="molecule type" value="Genomic_DNA"/>
</dbReference>
<dbReference type="RefSeq" id="WP_011185944.1">
    <property type="nucleotide sequence ID" value="NC_006087.1"/>
</dbReference>
<dbReference type="SMR" id="Q6AF97"/>
<dbReference type="STRING" id="281090.Lxx10950"/>
<dbReference type="KEGG" id="lxx:Lxx10950"/>
<dbReference type="eggNOG" id="COG0082">
    <property type="taxonomic scope" value="Bacteria"/>
</dbReference>
<dbReference type="HOGENOM" id="CLU_034547_2_0_11"/>
<dbReference type="UniPathway" id="UPA00053">
    <property type="reaction ID" value="UER00090"/>
</dbReference>
<dbReference type="Proteomes" id="UP000001306">
    <property type="component" value="Chromosome"/>
</dbReference>
<dbReference type="GO" id="GO:0005829">
    <property type="term" value="C:cytosol"/>
    <property type="evidence" value="ECO:0007669"/>
    <property type="project" value="TreeGrafter"/>
</dbReference>
<dbReference type="GO" id="GO:0004107">
    <property type="term" value="F:chorismate synthase activity"/>
    <property type="evidence" value="ECO:0007669"/>
    <property type="project" value="UniProtKB-UniRule"/>
</dbReference>
<dbReference type="GO" id="GO:0010181">
    <property type="term" value="F:FMN binding"/>
    <property type="evidence" value="ECO:0007669"/>
    <property type="project" value="TreeGrafter"/>
</dbReference>
<dbReference type="GO" id="GO:0008652">
    <property type="term" value="P:amino acid biosynthetic process"/>
    <property type="evidence" value="ECO:0007669"/>
    <property type="project" value="UniProtKB-KW"/>
</dbReference>
<dbReference type="GO" id="GO:0009073">
    <property type="term" value="P:aromatic amino acid family biosynthetic process"/>
    <property type="evidence" value="ECO:0007669"/>
    <property type="project" value="UniProtKB-KW"/>
</dbReference>
<dbReference type="GO" id="GO:0009423">
    <property type="term" value="P:chorismate biosynthetic process"/>
    <property type="evidence" value="ECO:0007669"/>
    <property type="project" value="UniProtKB-UniRule"/>
</dbReference>
<dbReference type="CDD" id="cd07304">
    <property type="entry name" value="Chorismate_synthase"/>
    <property type="match status" value="1"/>
</dbReference>
<dbReference type="FunFam" id="3.60.150.10:FF:000002">
    <property type="entry name" value="Chorismate synthase"/>
    <property type="match status" value="1"/>
</dbReference>
<dbReference type="Gene3D" id="3.60.150.10">
    <property type="entry name" value="Chorismate synthase AroC"/>
    <property type="match status" value="1"/>
</dbReference>
<dbReference type="HAMAP" id="MF_00300">
    <property type="entry name" value="Chorismate_synth"/>
    <property type="match status" value="1"/>
</dbReference>
<dbReference type="InterPro" id="IPR000453">
    <property type="entry name" value="Chorismate_synth"/>
</dbReference>
<dbReference type="InterPro" id="IPR035904">
    <property type="entry name" value="Chorismate_synth_AroC_sf"/>
</dbReference>
<dbReference type="InterPro" id="IPR020541">
    <property type="entry name" value="Chorismate_synthase_CS"/>
</dbReference>
<dbReference type="NCBIfam" id="TIGR00033">
    <property type="entry name" value="aroC"/>
    <property type="match status" value="1"/>
</dbReference>
<dbReference type="NCBIfam" id="NF003793">
    <property type="entry name" value="PRK05382.1"/>
    <property type="match status" value="1"/>
</dbReference>
<dbReference type="PANTHER" id="PTHR21085">
    <property type="entry name" value="CHORISMATE SYNTHASE"/>
    <property type="match status" value="1"/>
</dbReference>
<dbReference type="PANTHER" id="PTHR21085:SF0">
    <property type="entry name" value="CHORISMATE SYNTHASE"/>
    <property type="match status" value="1"/>
</dbReference>
<dbReference type="Pfam" id="PF01264">
    <property type="entry name" value="Chorismate_synt"/>
    <property type="match status" value="1"/>
</dbReference>
<dbReference type="PIRSF" id="PIRSF001456">
    <property type="entry name" value="Chorismate_synth"/>
    <property type="match status" value="1"/>
</dbReference>
<dbReference type="SUPFAM" id="SSF103263">
    <property type="entry name" value="Chorismate synthase, AroC"/>
    <property type="match status" value="1"/>
</dbReference>
<dbReference type="PROSITE" id="PS00787">
    <property type="entry name" value="CHORISMATE_SYNTHASE_1"/>
    <property type="match status" value="1"/>
</dbReference>
<dbReference type="PROSITE" id="PS00788">
    <property type="entry name" value="CHORISMATE_SYNTHASE_2"/>
    <property type="match status" value="1"/>
</dbReference>
<dbReference type="PROSITE" id="PS00789">
    <property type="entry name" value="CHORISMATE_SYNTHASE_3"/>
    <property type="match status" value="1"/>
</dbReference>
<proteinExistence type="inferred from homology"/>